<accession>Q0BYB5</accession>
<organism>
    <name type="scientific">Hyphomonas neptunium (strain ATCC 15444)</name>
    <dbReference type="NCBI Taxonomy" id="228405"/>
    <lineage>
        <taxon>Bacteria</taxon>
        <taxon>Pseudomonadati</taxon>
        <taxon>Pseudomonadota</taxon>
        <taxon>Alphaproteobacteria</taxon>
        <taxon>Hyphomonadales</taxon>
        <taxon>Hyphomonadaceae</taxon>
        <taxon>Hyphomonas</taxon>
    </lineage>
</organism>
<dbReference type="EMBL" id="CP000158">
    <property type="protein sequence ID" value="ABI78045.1"/>
    <property type="molecule type" value="Genomic_DNA"/>
</dbReference>
<dbReference type="RefSeq" id="WP_011647825.1">
    <property type="nucleotide sequence ID" value="NC_008358.1"/>
</dbReference>
<dbReference type="SMR" id="Q0BYB5"/>
<dbReference type="STRING" id="228405.HNE_2850"/>
<dbReference type="KEGG" id="hne:HNE_2850"/>
<dbReference type="eggNOG" id="COG0088">
    <property type="taxonomic scope" value="Bacteria"/>
</dbReference>
<dbReference type="HOGENOM" id="CLU_041575_5_1_5"/>
<dbReference type="Proteomes" id="UP000001959">
    <property type="component" value="Chromosome"/>
</dbReference>
<dbReference type="GO" id="GO:1990904">
    <property type="term" value="C:ribonucleoprotein complex"/>
    <property type="evidence" value="ECO:0007669"/>
    <property type="project" value="UniProtKB-KW"/>
</dbReference>
<dbReference type="GO" id="GO:0005840">
    <property type="term" value="C:ribosome"/>
    <property type="evidence" value="ECO:0007669"/>
    <property type="project" value="UniProtKB-KW"/>
</dbReference>
<dbReference type="GO" id="GO:0019843">
    <property type="term" value="F:rRNA binding"/>
    <property type="evidence" value="ECO:0007669"/>
    <property type="project" value="UniProtKB-UniRule"/>
</dbReference>
<dbReference type="GO" id="GO:0003735">
    <property type="term" value="F:structural constituent of ribosome"/>
    <property type="evidence" value="ECO:0007669"/>
    <property type="project" value="InterPro"/>
</dbReference>
<dbReference type="GO" id="GO:0006412">
    <property type="term" value="P:translation"/>
    <property type="evidence" value="ECO:0007669"/>
    <property type="project" value="UniProtKB-UniRule"/>
</dbReference>
<dbReference type="Gene3D" id="3.40.1370.10">
    <property type="match status" value="1"/>
</dbReference>
<dbReference type="HAMAP" id="MF_01328_B">
    <property type="entry name" value="Ribosomal_uL4_B"/>
    <property type="match status" value="1"/>
</dbReference>
<dbReference type="InterPro" id="IPR002136">
    <property type="entry name" value="Ribosomal_uL4"/>
</dbReference>
<dbReference type="InterPro" id="IPR013005">
    <property type="entry name" value="Ribosomal_uL4-like"/>
</dbReference>
<dbReference type="InterPro" id="IPR023574">
    <property type="entry name" value="Ribosomal_uL4_dom_sf"/>
</dbReference>
<dbReference type="NCBIfam" id="TIGR03953">
    <property type="entry name" value="rplD_bact"/>
    <property type="match status" value="1"/>
</dbReference>
<dbReference type="PANTHER" id="PTHR10746">
    <property type="entry name" value="50S RIBOSOMAL PROTEIN L4"/>
    <property type="match status" value="1"/>
</dbReference>
<dbReference type="PANTHER" id="PTHR10746:SF6">
    <property type="entry name" value="LARGE RIBOSOMAL SUBUNIT PROTEIN UL4M"/>
    <property type="match status" value="1"/>
</dbReference>
<dbReference type="Pfam" id="PF00573">
    <property type="entry name" value="Ribosomal_L4"/>
    <property type="match status" value="1"/>
</dbReference>
<dbReference type="SUPFAM" id="SSF52166">
    <property type="entry name" value="Ribosomal protein L4"/>
    <property type="match status" value="1"/>
</dbReference>
<keyword id="KW-1185">Reference proteome</keyword>
<keyword id="KW-0687">Ribonucleoprotein</keyword>
<keyword id="KW-0689">Ribosomal protein</keyword>
<keyword id="KW-0694">RNA-binding</keyword>
<keyword id="KW-0699">rRNA-binding</keyword>
<feature type="chain" id="PRO_1000052417" description="Large ribosomal subunit protein uL4">
    <location>
        <begin position="1"/>
        <end position="214"/>
    </location>
</feature>
<feature type="region of interest" description="Disordered" evidence="2">
    <location>
        <begin position="43"/>
        <end position="83"/>
    </location>
</feature>
<protein>
    <recommendedName>
        <fullName evidence="1">Large ribosomal subunit protein uL4</fullName>
    </recommendedName>
    <alternativeName>
        <fullName evidence="3">50S ribosomal protein L4</fullName>
    </alternativeName>
</protein>
<evidence type="ECO:0000255" key="1">
    <source>
        <dbReference type="HAMAP-Rule" id="MF_01328"/>
    </source>
</evidence>
<evidence type="ECO:0000256" key="2">
    <source>
        <dbReference type="SAM" id="MobiDB-lite"/>
    </source>
</evidence>
<evidence type="ECO:0000305" key="3"/>
<reference key="1">
    <citation type="journal article" date="2006" name="J. Bacteriol.">
        <title>Comparative genomic evidence for a close relationship between the dimorphic prosthecate bacteria Hyphomonas neptunium and Caulobacter crescentus.</title>
        <authorList>
            <person name="Badger J.H."/>
            <person name="Hoover T.R."/>
            <person name="Brun Y.V."/>
            <person name="Weiner R.M."/>
            <person name="Laub M.T."/>
            <person name="Alexandre G."/>
            <person name="Mrazek J."/>
            <person name="Ren Q."/>
            <person name="Paulsen I.T."/>
            <person name="Nelson K.E."/>
            <person name="Khouri H.M."/>
            <person name="Radune D."/>
            <person name="Sosa J."/>
            <person name="Dodson R.J."/>
            <person name="Sullivan S.A."/>
            <person name="Rosovitz M.J."/>
            <person name="Madupu R."/>
            <person name="Brinkac L.M."/>
            <person name="Durkin A.S."/>
            <person name="Daugherty S.C."/>
            <person name="Kothari S.P."/>
            <person name="Giglio M.G."/>
            <person name="Zhou L."/>
            <person name="Haft D.H."/>
            <person name="Selengut J.D."/>
            <person name="Davidsen T.M."/>
            <person name="Yang Q."/>
            <person name="Zafar N."/>
            <person name="Ward N.L."/>
        </authorList>
    </citation>
    <scope>NUCLEOTIDE SEQUENCE [LARGE SCALE GENOMIC DNA]</scope>
    <source>
        <strain>ATCC 15444</strain>
    </source>
</reference>
<name>RL4_HYPNA</name>
<sequence>MELAVKTLAGDAAGNIDLDDAIFGIDEIRGDILQRTVRWQLARRQAGTHKAKSRSEVNRTTKKSIKQKGSGGARHGSRNAPIFVGGGIAHGPRVRSHAHDLPKKIRKMALAHALSSKAKDSSIMVIDTCELDSPKTKGLIQAFKDLGIENALIISGTEVNENFARAARNIPNIDVLPVAGLNVYDILRRRTLVITKEAAEGIKARFDGAKAEAE</sequence>
<proteinExistence type="inferred from homology"/>
<comment type="function">
    <text evidence="1">One of the primary rRNA binding proteins, this protein initially binds near the 5'-end of the 23S rRNA. It is important during the early stages of 50S assembly. It makes multiple contacts with different domains of the 23S rRNA in the assembled 50S subunit and ribosome.</text>
</comment>
<comment type="function">
    <text evidence="1">Forms part of the polypeptide exit tunnel.</text>
</comment>
<comment type="subunit">
    <text evidence="1">Part of the 50S ribosomal subunit.</text>
</comment>
<comment type="similarity">
    <text evidence="1">Belongs to the universal ribosomal protein uL4 family.</text>
</comment>
<gene>
    <name evidence="1" type="primary">rplD</name>
    <name type="ordered locus">HNE_2850</name>
</gene>